<gene>
    <name evidence="4" type="primary">TZF5</name>
    <name evidence="5" type="ordered locus">At5g44260</name>
    <name evidence="6" type="ORF">K9L2.1</name>
</gene>
<protein>
    <recommendedName>
        <fullName>Zinc finger CCCH domain-containing protein 61</fullName>
        <shortName>AtC3H61</shortName>
    </recommendedName>
    <alternativeName>
        <fullName evidence="4">Tandem CCCH Zinc Finger protein 5</fullName>
        <shortName evidence="4">AtTZF5</shortName>
    </alternativeName>
</protein>
<dbReference type="EMBL" id="AB011475">
    <property type="protein sequence ID" value="BAB10111.1"/>
    <property type="molecule type" value="Genomic_DNA"/>
</dbReference>
<dbReference type="EMBL" id="CP002688">
    <property type="protein sequence ID" value="AED95082.1"/>
    <property type="molecule type" value="Genomic_DNA"/>
</dbReference>
<dbReference type="EMBL" id="AY034916">
    <property type="protein sequence ID" value="AAK59423.1"/>
    <property type="molecule type" value="mRNA"/>
</dbReference>
<dbReference type="EMBL" id="AY142542">
    <property type="protein sequence ID" value="AAN13124.1"/>
    <property type="molecule type" value="mRNA"/>
</dbReference>
<dbReference type="RefSeq" id="NP_199239.1">
    <property type="nucleotide sequence ID" value="NM_123793.3"/>
</dbReference>
<dbReference type="BioGRID" id="19699">
    <property type="interactions" value="10"/>
</dbReference>
<dbReference type="FunCoup" id="Q9FKW2">
    <property type="interactions" value="53"/>
</dbReference>
<dbReference type="IntAct" id="Q9FKW2">
    <property type="interactions" value="10"/>
</dbReference>
<dbReference type="STRING" id="3702.Q9FKW2"/>
<dbReference type="GlyGen" id="Q9FKW2">
    <property type="glycosylation" value="1 site"/>
</dbReference>
<dbReference type="iPTMnet" id="Q9FKW2"/>
<dbReference type="PaxDb" id="3702-AT5G44260.1"/>
<dbReference type="ProteomicsDB" id="240489"/>
<dbReference type="EnsemblPlants" id="AT5G44260.1">
    <property type="protein sequence ID" value="AT5G44260.1"/>
    <property type="gene ID" value="AT5G44260"/>
</dbReference>
<dbReference type="GeneID" id="834449"/>
<dbReference type="Gramene" id="AT5G44260.1">
    <property type="protein sequence ID" value="AT5G44260.1"/>
    <property type="gene ID" value="AT5G44260"/>
</dbReference>
<dbReference type="KEGG" id="ath:AT5G44260"/>
<dbReference type="Araport" id="AT5G44260"/>
<dbReference type="TAIR" id="AT5G44260">
    <property type="gene designation" value="TZF5"/>
</dbReference>
<dbReference type="eggNOG" id="KOG1595">
    <property type="taxonomic scope" value="Eukaryota"/>
</dbReference>
<dbReference type="HOGENOM" id="CLU_044407_3_0_1"/>
<dbReference type="InParanoid" id="Q9FKW2"/>
<dbReference type="OMA" id="DYCYDSD"/>
<dbReference type="PhylomeDB" id="Q9FKW2"/>
<dbReference type="CD-CODE" id="24475C75">
    <property type="entry name" value="Stress granule"/>
</dbReference>
<dbReference type="CD-CODE" id="60F64496">
    <property type="entry name" value="P-body"/>
</dbReference>
<dbReference type="PRO" id="PR:Q9FKW2"/>
<dbReference type="Proteomes" id="UP000006548">
    <property type="component" value="Chromosome 5"/>
</dbReference>
<dbReference type="ExpressionAtlas" id="Q9FKW2">
    <property type="expression patterns" value="baseline and differential"/>
</dbReference>
<dbReference type="GO" id="GO:0010494">
    <property type="term" value="C:cytoplasmic stress granule"/>
    <property type="evidence" value="ECO:0000314"/>
    <property type="project" value="TAIR"/>
</dbReference>
<dbReference type="GO" id="GO:0000932">
    <property type="term" value="C:P-body"/>
    <property type="evidence" value="ECO:0000314"/>
    <property type="project" value="TAIR"/>
</dbReference>
<dbReference type="GO" id="GO:0003677">
    <property type="term" value="F:DNA binding"/>
    <property type="evidence" value="ECO:0007669"/>
    <property type="project" value="UniProtKB-KW"/>
</dbReference>
<dbReference type="GO" id="GO:0003700">
    <property type="term" value="F:DNA-binding transcription factor activity"/>
    <property type="evidence" value="ECO:0000250"/>
    <property type="project" value="TAIR"/>
</dbReference>
<dbReference type="GO" id="GO:0008270">
    <property type="term" value="F:zinc ion binding"/>
    <property type="evidence" value="ECO:0007669"/>
    <property type="project" value="UniProtKB-KW"/>
</dbReference>
<dbReference type="FunFam" id="3.30.1370.210:FF:000007">
    <property type="entry name" value="Zinc finger CCCH domain-containing protein"/>
    <property type="match status" value="1"/>
</dbReference>
<dbReference type="Gene3D" id="3.30.1370.210">
    <property type="match status" value="1"/>
</dbReference>
<dbReference type="InterPro" id="IPR045234">
    <property type="entry name" value="Unkempt-like"/>
</dbReference>
<dbReference type="InterPro" id="IPR000571">
    <property type="entry name" value="Znf_CCCH"/>
</dbReference>
<dbReference type="InterPro" id="IPR036855">
    <property type="entry name" value="Znf_CCCH_sf"/>
</dbReference>
<dbReference type="PANTHER" id="PTHR14493">
    <property type="entry name" value="UNKEMPT FAMILY MEMBER"/>
    <property type="match status" value="1"/>
</dbReference>
<dbReference type="PANTHER" id="PTHR14493:SF95">
    <property type="entry name" value="ZINC FINGER CCCH DOMAIN-CONTAINING PROTEIN 61"/>
    <property type="match status" value="1"/>
</dbReference>
<dbReference type="Pfam" id="PF00642">
    <property type="entry name" value="zf-CCCH"/>
    <property type="match status" value="1"/>
</dbReference>
<dbReference type="Pfam" id="PF25512">
    <property type="entry name" value="zf-CCCH_AtC3H23"/>
    <property type="match status" value="1"/>
</dbReference>
<dbReference type="SMART" id="SM00356">
    <property type="entry name" value="ZnF_C3H1"/>
    <property type="match status" value="2"/>
</dbReference>
<dbReference type="SUPFAM" id="SSF90229">
    <property type="entry name" value="CCCH zinc finger"/>
    <property type="match status" value="1"/>
</dbReference>
<dbReference type="PROSITE" id="PS50103">
    <property type="entry name" value="ZF_C3H1"/>
    <property type="match status" value="1"/>
</dbReference>
<name>C3H61_ARATH</name>
<keyword id="KW-0963">Cytoplasm</keyword>
<keyword id="KW-0238">DNA-binding</keyword>
<keyword id="KW-0479">Metal-binding</keyword>
<keyword id="KW-1185">Reference proteome</keyword>
<keyword id="KW-0677">Repeat</keyword>
<keyword id="KW-0862">Zinc</keyword>
<keyword id="KW-0863">Zinc-finger</keyword>
<reference key="1">
    <citation type="journal article" date="1998" name="DNA Res.">
        <title>Structural analysis of Arabidopsis thaliana chromosome 5. V. Sequence features of the regions of 1,381,565 bp covered by twenty one physically assigned P1 and TAC clones.</title>
        <authorList>
            <person name="Kaneko T."/>
            <person name="Kotani H."/>
            <person name="Nakamura Y."/>
            <person name="Sato S."/>
            <person name="Asamizu E."/>
            <person name="Miyajima N."/>
            <person name="Tabata S."/>
        </authorList>
    </citation>
    <scope>NUCLEOTIDE SEQUENCE [LARGE SCALE GENOMIC DNA]</scope>
    <source>
        <strain>cv. Columbia</strain>
    </source>
</reference>
<reference key="2">
    <citation type="journal article" date="2017" name="Plant J.">
        <title>Araport11: a complete reannotation of the Arabidopsis thaliana reference genome.</title>
        <authorList>
            <person name="Cheng C.Y."/>
            <person name="Krishnakumar V."/>
            <person name="Chan A.P."/>
            <person name="Thibaud-Nissen F."/>
            <person name="Schobel S."/>
            <person name="Town C.D."/>
        </authorList>
    </citation>
    <scope>GENOME REANNOTATION</scope>
    <source>
        <strain>cv. Columbia</strain>
    </source>
</reference>
<reference key="3">
    <citation type="journal article" date="2003" name="Science">
        <title>Empirical analysis of transcriptional activity in the Arabidopsis genome.</title>
        <authorList>
            <person name="Yamada K."/>
            <person name="Lim J."/>
            <person name="Dale J.M."/>
            <person name="Chen H."/>
            <person name="Shinn P."/>
            <person name="Palm C.J."/>
            <person name="Southwick A.M."/>
            <person name="Wu H.C."/>
            <person name="Kim C.J."/>
            <person name="Nguyen M."/>
            <person name="Pham P.K."/>
            <person name="Cheuk R.F."/>
            <person name="Karlin-Newmann G."/>
            <person name="Liu S.X."/>
            <person name="Lam B."/>
            <person name="Sakano H."/>
            <person name="Wu T."/>
            <person name="Yu G."/>
            <person name="Miranda M."/>
            <person name="Quach H.L."/>
            <person name="Tripp M."/>
            <person name="Chang C.H."/>
            <person name="Lee J.M."/>
            <person name="Toriumi M.J."/>
            <person name="Chan M.M."/>
            <person name="Tang C.C."/>
            <person name="Onodera C.S."/>
            <person name="Deng J.M."/>
            <person name="Akiyama K."/>
            <person name="Ansari Y."/>
            <person name="Arakawa T."/>
            <person name="Banh J."/>
            <person name="Banno F."/>
            <person name="Bowser L."/>
            <person name="Brooks S.Y."/>
            <person name="Carninci P."/>
            <person name="Chao Q."/>
            <person name="Choy N."/>
            <person name="Enju A."/>
            <person name="Goldsmith A.D."/>
            <person name="Gurjal M."/>
            <person name="Hansen N.F."/>
            <person name="Hayashizaki Y."/>
            <person name="Johnson-Hopson C."/>
            <person name="Hsuan V.W."/>
            <person name="Iida K."/>
            <person name="Karnes M."/>
            <person name="Khan S."/>
            <person name="Koesema E."/>
            <person name="Ishida J."/>
            <person name="Jiang P.X."/>
            <person name="Jones T."/>
            <person name="Kawai J."/>
            <person name="Kamiya A."/>
            <person name="Meyers C."/>
            <person name="Nakajima M."/>
            <person name="Narusaka M."/>
            <person name="Seki M."/>
            <person name="Sakurai T."/>
            <person name="Satou M."/>
            <person name="Tamse R."/>
            <person name="Vaysberg M."/>
            <person name="Wallender E.K."/>
            <person name="Wong C."/>
            <person name="Yamamura Y."/>
            <person name="Yuan S."/>
            <person name="Shinozaki K."/>
            <person name="Davis R.W."/>
            <person name="Theologis A."/>
            <person name="Ecker J.R."/>
        </authorList>
    </citation>
    <scope>NUCLEOTIDE SEQUENCE [LARGE SCALE MRNA]</scope>
    <source>
        <strain>cv. Columbia</strain>
    </source>
</reference>
<reference key="4">
    <citation type="journal article" date="2008" name="BMC Genomics">
        <title>Genome-wide analysis of CCCH zinc finger family in Arabidopsis and rice.</title>
        <authorList>
            <person name="Wang D."/>
            <person name="Guo Y."/>
            <person name="Wu C."/>
            <person name="Yang G."/>
            <person name="Li Y."/>
            <person name="Zheng C."/>
        </authorList>
    </citation>
    <scope>NOMENCLATURE</scope>
</reference>
<reference key="5">
    <citation type="journal article" date="2016" name="PLoS ONE">
        <title>Plant tandem CCCH zinc finger proteins interact with ABA, drought, and stress response regulators in processing-bodies and stress granules.</title>
        <authorList>
            <person name="Bogamuwa S."/>
            <person name="Jang J.C."/>
        </authorList>
    </citation>
    <scope>INTERACTION WITH MARD1 AND RD21A</scope>
    <scope>SUBCELLULAR LOCATION</scope>
</reference>
<proteinExistence type="evidence at protein level"/>
<evidence type="ECO:0000255" key="1">
    <source>
        <dbReference type="PROSITE-ProRule" id="PRU00723"/>
    </source>
</evidence>
<evidence type="ECO:0000256" key="2">
    <source>
        <dbReference type="SAM" id="MobiDB-lite"/>
    </source>
</evidence>
<evidence type="ECO:0000269" key="3">
    <source>
    </source>
</evidence>
<evidence type="ECO:0000303" key="4">
    <source>
    </source>
</evidence>
<evidence type="ECO:0000312" key="5">
    <source>
        <dbReference type="Araport" id="AT5G44260"/>
    </source>
</evidence>
<evidence type="ECO:0000312" key="6">
    <source>
        <dbReference type="EMBL" id="BAB10111.1"/>
    </source>
</evidence>
<feature type="chain" id="PRO_0000372011" description="Zinc finger CCCH domain-containing protein 61">
    <location>
        <begin position="1"/>
        <end position="381"/>
    </location>
</feature>
<feature type="zinc finger region" description="C3H1-type 1" evidence="1">
    <location>
        <begin position="101"/>
        <end position="128"/>
    </location>
</feature>
<feature type="zinc finger region" description="C3H1-type 2" evidence="1">
    <location>
        <begin position="137"/>
        <end position="159"/>
    </location>
</feature>
<feature type="region of interest" description="Disordered" evidence="2">
    <location>
        <begin position="1"/>
        <end position="39"/>
    </location>
</feature>
<feature type="compositionally biased region" description="Low complexity" evidence="2">
    <location>
        <begin position="21"/>
        <end position="37"/>
    </location>
</feature>
<comment type="subunit">
    <text evidence="3">Interacts with MARD1/FLZ9 and RD21A via its CCCH zing finger domains.</text>
</comment>
<comment type="subcellular location">
    <subcellularLocation>
        <location evidence="3">Cytoplasm</location>
        <location evidence="3">Stress granule</location>
    </subcellularLocation>
    <subcellularLocation>
        <location evidence="3">Cytoplasm</location>
        <location evidence="3">P-body</location>
    </subcellularLocation>
</comment>
<accession>Q9FKW2</accession>
<organism>
    <name type="scientific">Arabidopsis thaliana</name>
    <name type="common">Mouse-ear cress</name>
    <dbReference type="NCBI Taxonomy" id="3702"/>
    <lineage>
        <taxon>Eukaryota</taxon>
        <taxon>Viridiplantae</taxon>
        <taxon>Streptophyta</taxon>
        <taxon>Embryophyta</taxon>
        <taxon>Tracheophyta</taxon>
        <taxon>Spermatophyta</taxon>
        <taxon>Magnoliopsida</taxon>
        <taxon>eudicotyledons</taxon>
        <taxon>Gunneridae</taxon>
        <taxon>Pentapetalae</taxon>
        <taxon>rosids</taxon>
        <taxon>malvids</taxon>
        <taxon>Brassicales</taxon>
        <taxon>Brassicaceae</taxon>
        <taxon>Camelineae</taxon>
        <taxon>Arabidopsis</taxon>
    </lineage>
</organism>
<sequence length="381" mass="42058">MDVEHHKSGHISRPTVDIPPRKLLSSAKSPSSVSSPLRDYKEQKDYCYDSDSEDPYAGDHFRMYEFKIRRCTRSRSHDWTDCPFSHPGEKARRRDPRRFHYTGEVCPEFSRHGDCSRGDECGFAHGVFECWLHPSRYRTEACKDGKHCKRKVCFFAHSPRQLRVLPPSPENHISGGCGGSPSSSPASVLSNKNNRCCLFCSHSPTSTLLNLSRSPSSSPPLSPADKADAFSRLSRRRTAVLNELISSLDSLSLTEALAASSSSPVTMPISTATMIASSNLSSNHHHHRLPPWLDVGDRDLQLQQSSPLRFALSPSSTPSYLHGQLQPPPSSFFGDEFTPRGGRLSDFSVAAAAAAQARDKNSFEVGSSGDLDLGWVNDLLT</sequence>